<name>THIC_NEIMB</name>
<organism>
    <name type="scientific">Neisseria meningitidis serogroup B (strain ATCC BAA-335 / MC58)</name>
    <dbReference type="NCBI Taxonomy" id="122586"/>
    <lineage>
        <taxon>Bacteria</taxon>
        <taxon>Pseudomonadati</taxon>
        <taxon>Pseudomonadota</taxon>
        <taxon>Betaproteobacteria</taxon>
        <taxon>Neisseriales</taxon>
        <taxon>Neisseriaceae</taxon>
        <taxon>Neisseria</taxon>
    </lineage>
</organism>
<gene>
    <name evidence="1" type="primary">thiC</name>
    <name type="ordered locus">NMB2040</name>
</gene>
<comment type="function">
    <text evidence="1">Catalyzes the synthesis of the hydroxymethylpyrimidine phosphate (HMP-P) moiety of thiamine from aminoimidazole ribotide (AIR) in a radical S-adenosyl-L-methionine (SAM)-dependent reaction.</text>
</comment>
<comment type="catalytic activity">
    <reaction evidence="1">
        <text>5-amino-1-(5-phospho-beta-D-ribosyl)imidazole + S-adenosyl-L-methionine = 4-amino-2-methyl-5-(phosphooxymethyl)pyrimidine + CO + 5'-deoxyadenosine + formate + L-methionine + 3 H(+)</text>
        <dbReference type="Rhea" id="RHEA:24840"/>
        <dbReference type="ChEBI" id="CHEBI:15378"/>
        <dbReference type="ChEBI" id="CHEBI:15740"/>
        <dbReference type="ChEBI" id="CHEBI:17245"/>
        <dbReference type="ChEBI" id="CHEBI:17319"/>
        <dbReference type="ChEBI" id="CHEBI:57844"/>
        <dbReference type="ChEBI" id="CHEBI:58354"/>
        <dbReference type="ChEBI" id="CHEBI:59789"/>
        <dbReference type="ChEBI" id="CHEBI:137981"/>
        <dbReference type="EC" id="4.1.99.17"/>
    </reaction>
</comment>
<comment type="cofactor">
    <cofactor evidence="1">
        <name>[4Fe-4S] cluster</name>
        <dbReference type="ChEBI" id="CHEBI:49883"/>
    </cofactor>
    <text evidence="1">Binds 1 [4Fe-4S] cluster per subunit. The cluster is coordinated with 3 cysteines and an exchangeable S-adenosyl-L-methionine.</text>
</comment>
<comment type="pathway">
    <text evidence="1">Cofactor biosynthesis; thiamine diphosphate biosynthesis.</text>
</comment>
<comment type="subunit">
    <text evidence="1">Homodimer.</text>
</comment>
<comment type="similarity">
    <text evidence="1">Belongs to the ThiC family.</text>
</comment>
<proteinExistence type="inferred from homology"/>
<accession>Q9JXI0</accession>
<reference key="1">
    <citation type="journal article" date="2000" name="Science">
        <title>Complete genome sequence of Neisseria meningitidis serogroup B strain MC58.</title>
        <authorList>
            <person name="Tettelin H."/>
            <person name="Saunders N.J."/>
            <person name="Heidelberg J.F."/>
            <person name="Jeffries A.C."/>
            <person name="Nelson K.E."/>
            <person name="Eisen J.A."/>
            <person name="Ketchum K.A."/>
            <person name="Hood D.W."/>
            <person name="Peden J.F."/>
            <person name="Dodson R.J."/>
            <person name="Nelson W.C."/>
            <person name="Gwinn M.L."/>
            <person name="DeBoy R.T."/>
            <person name="Peterson J.D."/>
            <person name="Hickey E.K."/>
            <person name="Haft D.H."/>
            <person name="Salzberg S.L."/>
            <person name="White O."/>
            <person name="Fleischmann R.D."/>
            <person name="Dougherty B.A."/>
            <person name="Mason T.M."/>
            <person name="Ciecko A."/>
            <person name="Parksey D.S."/>
            <person name="Blair E."/>
            <person name="Cittone H."/>
            <person name="Clark E.B."/>
            <person name="Cotton M.D."/>
            <person name="Utterback T.R."/>
            <person name="Khouri H.M."/>
            <person name="Qin H."/>
            <person name="Vamathevan J.J."/>
            <person name="Gill J."/>
            <person name="Scarlato V."/>
            <person name="Masignani V."/>
            <person name="Pizza M."/>
            <person name="Grandi G."/>
            <person name="Sun L."/>
            <person name="Smith H.O."/>
            <person name="Fraser C.M."/>
            <person name="Moxon E.R."/>
            <person name="Rappuoli R."/>
            <person name="Venter J.C."/>
        </authorList>
    </citation>
    <scope>NUCLEOTIDE SEQUENCE [LARGE SCALE GENOMIC DNA]</scope>
    <source>
        <strain>ATCC BAA-335 / MC58</strain>
    </source>
</reference>
<sequence>MTTPKKTAKTSGNEARELADLSEDIGICFKYPNSERVYLQGSRDDIRVPLREIRQDDTYTAQGTEANPPIPVYDTSGVYGDPAAHIDLKQGLPHIRTAWLDERGDTEILPKLSSEYGIERAHDPKTAHLRFNQITRPRRAKSGSNVTQLHYARQGIITPEMEFVAIRERLKLDELSQKPEYAKLLEQHAGQSFGANIPTHPDQITPEFVRQEIAAGRAIIPANINHPELEPMIIGRNFRVKINGNLGNSAVTSSLTEEVEKMVWSLRWGADTIMDLSTGAHIHETREWIIRNAPVPIGTVPIYQALEKTGGIAEDLTWDLFRDTLIEQAEQGVDYFTIHAGVLLRYVPMTANRLTGIVSRGGSIMAKWCLAHHRENFLYTHFDEICEIMKAYDVSFSLGDGLRPGCIADANDESQFAELHTLGELTDKAWKHDVQVMIEGPGHVPLQRVKENMTEELQHCFEAPFYTLGPLVTDIAPGYDHITSGIGAANIGWYGTAMLCYVTPKEHLGLPDKEDVRTGIITYKLAAHAADLAKGWPGAQLRDNALSKARFEFRWRDQFRLSLDPERAESFHDETLPAEGAKIAHFCSMCGPKFCSMKITQEVRDYADKQKAQRQGMEEKAVEFVKKGAKIYS</sequence>
<keyword id="KW-0004">4Fe-4S</keyword>
<keyword id="KW-0408">Iron</keyword>
<keyword id="KW-0411">Iron-sulfur</keyword>
<keyword id="KW-0456">Lyase</keyword>
<keyword id="KW-0479">Metal-binding</keyword>
<keyword id="KW-1185">Reference proteome</keyword>
<keyword id="KW-0949">S-adenosyl-L-methionine</keyword>
<keyword id="KW-0784">Thiamine biosynthesis</keyword>
<keyword id="KW-0862">Zinc</keyword>
<dbReference type="EC" id="4.1.99.17" evidence="1"/>
<dbReference type="EMBL" id="AE002098">
    <property type="protein sequence ID" value="AAF42361.1"/>
    <property type="molecule type" value="Genomic_DNA"/>
</dbReference>
<dbReference type="PIR" id="E81012">
    <property type="entry name" value="E81012"/>
</dbReference>
<dbReference type="RefSeq" id="NP_275031.1">
    <property type="nucleotide sequence ID" value="NC_003112.2"/>
</dbReference>
<dbReference type="RefSeq" id="WP_002244346.1">
    <property type="nucleotide sequence ID" value="NC_003112.2"/>
</dbReference>
<dbReference type="SMR" id="Q9JXI0"/>
<dbReference type="FunCoup" id="Q9JXI0">
    <property type="interactions" value="436"/>
</dbReference>
<dbReference type="STRING" id="122586.NMB2040"/>
<dbReference type="PaxDb" id="122586-NMB2040"/>
<dbReference type="KEGG" id="nme:NMB2040"/>
<dbReference type="PATRIC" id="fig|122586.8.peg.2611"/>
<dbReference type="HOGENOM" id="CLU_013181_2_1_4"/>
<dbReference type="InParanoid" id="Q9JXI0"/>
<dbReference type="OrthoDB" id="9805897at2"/>
<dbReference type="UniPathway" id="UPA00060"/>
<dbReference type="Proteomes" id="UP000000425">
    <property type="component" value="Chromosome"/>
</dbReference>
<dbReference type="GO" id="GO:0005829">
    <property type="term" value="C:cytosol"/>
    <property type="evidence" value="ECO:0000318"/>
    <property type="project" value="GO_Central"/>
</dbReference>
<dbReference type="GO" id="GO:0051539">
    <property type="term" value="F:4 iron, 4 sulfur cluster binding"/>
    <property type="evidence" value="ECO:0007669"/>
    <property type="project" value="UniProtKB-KW"/>
</dbReference>
<dbReference type="GO" id="GO:0016830">
    <property type="term" value="F:carbon-carbon lyase activity"/>
    <property type="evidence" value="ECO:0007669"/>
    <property type="project" value="InterPro"/>
</dbReference>
<dbReference type="GO" id="GO:0008270">
    <property type="term" value="F:zinc ion binding"/>
    <property type="evidence" value="ECO:0007669"/>
    <property type="project" value="UniProtKB-UniRule"/>
</dbReference>
<dbReference type="GO" id="GO:0009228">
    <property type="term" value="P:thiamine biosynthetic process"/>
    <property type="evidence" value="ECO:0000318"/>
    <property type="project" value="GO_Central"/>
</dbReference>
<dbReference type="GO" id="GO:0009229">
    <property type="term" value="P:thiamine diphosphate biosynthetic process"/>
    <property type="evidence" value="ECO:0007669"/>
    <property type="project" value="UniProtKB-UniRule"/>
</dbReference>
<dbReference type="FunFam" id="3.20.20.540:FF:000001">
    <property type="entry name" value="Phosphomethylpyrimidine synthase"/>
    <property type="match status" value="1"/>
</dbReference>
<dbReference type="Gene3D" id="6.10.250.620">
    <property type="match status" value="1"/>
</dbReference>
<dbReference type="Gene3D" id="3.20.20.540">
    <property type="entry name" value="Radical SAM ThiC family, central domain"/>
    <property type="match status" value="1"/>
</dbReference>
<dbReference type="HAMAP" id="MF_00089">
    <property type="entry name" value="ThiC"/>
    <property type="match status" value="1"/>
</dbReference>
<dbReference type="InterPro" id="IPR037509">
    <property type="entry name" value="ThiC"/>
</dbReference>
<dbReference type="InterPro" id="IPR025747">
    <property type="entry name" value="ThiC-associated_dom"/>
</dbReference>
<dbReference type="InterPro" id="IPR038521">
    <property type="entry name" value="ThiC/Bza_core_dom"/>
</dbReference>
<dbReference type="InterPro" id="IPR002817">
    <property type="entry name" value="ThiC/BzaA/B"/>
</dbReference>
<dbReference type="NCBIfam" id="NF006763">
    <property type="entry name" value="PRK09284.1"/>
    <property type="match status" value="1"/>
</dbReference>
<dbReference type="NCBIfam" id="NF009895">
    <property type="entry name" value="PRK13352.1"/>
    <property type="match status" value="1"/>
</dbReference>
<dbReference type="NCBIfam" id="TIGR00190">
    <property type="entry name" value="thiC"/>
    <property type="match status" value="1"/>
</dbReference>
<dbReference type="PANTHER" id="PTHR30557:SF1">
    <property type="entry name" value="PHOSPHOMETHYLPYRIMIDINE SYNTHASE, CHLOROPLASTIC"/>
    <property type="match status" value="1"/>
</dbReference>
<dbReference type="PANTHER" id="PTHR30557">
    <property type="entry name" value="THIAMINE BIOSYNTHESIS PROTEIN THIC"/>
    <property type="match status" value="1"/>
</dbReference>
<dbReference type="Pfam" id="PF13667">
    <property type="entry name" value="ThiC-associated"/>
    <property type="match status" value="1"/>
</dbReference>
<dbReference type="Pfam" id="PF01964">
    <property type="entry name" value="ThiC_Rad_SAM"/>
    <property type="match status" value="1"/>
</dbReference>
<dbReference type="SFLD" id="SFLDF00407">
    <property type="entry name" value="phosphomethylpyrimidine_syntha"/>
    <property type="match status" value="1"/>
</dbReference>
<dbReference type="SFLD" id="SFLDG01114">
    <property type="entry name" value="phosphomethylpyrimidine_syntha"/>
    <property type="match status" value="1"/>
</dbReference>
<dbReference type="SFLD" id="SFLDS00113">
    <property type="entry name" value="Radical_SAM_Phosphomethylpyrim"/>
    <property type="match status" value="1"/>
</dbReference>
<feature type="chain" id="PRO_0000152818" description="Phosphomethylpyrimidine synthase">
    <location>
        <begin position="1"/>
        <end position="633"/>
    </location>
</feature>
<feature type="binding site" evidence="1">
    <location>
        <position position="245"/>
    </location>
    <ligand>
        <name>substrate</name>
    </ligand>
</feature>
<feature type="binding site" evidence="1">
    <location>
        <position position="274"/>
    </location>
    <ligand>
        <name>substrate</name>
    </ligand>
</feature>
<feature type="binding site" evidence="1">
    <location>
        <position position="303"/>
    </location>
    <ligand>
        <name>substrate</name>
    </ligand>
</feature>
<feature type="binding site" evidence="1">
    <location>
        <position position="339"/>
    </location>
    <ligand>
        <name>substrate</name>
    </ligand>
</feature>
<feature type="binding site" evidence="1">
    <location>
        <begin position="359"/>
        <end position="361"/>
    </location>
    <ligand>
        <name>substrate</name>
    </ligand>
</feature>
<feature type="binding site" evidence="1">
    <location>
        <begin position="400"/>
        <end position="403"/>
    </location>
    <ligand>
        <name>substrate</name>
    </ligand>
</feature>
<feature type="binding site" evidence="1">
    <location>
        <position position="439"/>
    </location>
    <ligand>
        <name>substrate</name>
    </ligand>
</feature>
<feature type="binding site" evidence="1">
    <location>
        <position position="443"/>
    </location>
    <ligand>
        <name>Zn(2+)</name>
        <dbReference type="ChEBI" id="CHEBI:29105"/>
    </ligand>
</feature>
<feature type="binding site" evidence="1">
    <location>
        <position position="466"/>
    </location>
    <ligand>
        <name>substrate</name>
    </ligand>
</feature>
<feature type="binding site" evidence="1">
    <location>
        <position position="507"/>
    </location>
    <ligand>
        <name>Zn(2+)</name>
        <dbReference type="ChEBI" id="CHEBI:29105"/>
    </ligand>
</feature>
<feature type="binding site" evidence="1">
    <location>
        <position position="587"/>
    </location>
    <ligand>
        <name>[4Fe-4S] cluster</name>
        <dbReference type="ChEBI" id="CHEBI:49883"/>
        <note>4Fe-4S-S-AdoMet</note>
    </ligand>
</feature>
<feature type="binding site" evidence="1">
    <location>
        <position position="590"/>
    </location>
    <ligand>
        <name>[4Fe-4S] cluster</name>
        <dbReference type="ChEBI" id="CHEBI:49883"/>
        <note>4Fe-4S-S-AdoMet</note>
    </ligand>
</feature>
<feature type="binding site" evidence="1">
    <location>
        <position position="595"/>
    </location>
    <ligand>
        <name>[4Fe-4S] cluster</name>
        <dbReference type="ChEBI" id="CHEBI:49883"/>
        <note>4Fe-4S-S-AdoMet</note>
    </ligand>
</feature>
<evidence type="ECO:0000255" key="1">
    <source>
        <dbReference type="HAMAP-Rule" id="MF_00089"/>
    </source>
</evidence>
<protein>
    <recommendedName>
        <fullName evidence="1">Phosphomethylpyrimidine synthase</fullName>
        <ecNumber evidence="1">4.1.99.17</ecNumber>
    </recommendedName>
    <alternativeName>
        <fullName evidence="1">Hydroxymethylpyrimidine phosphate synthase</fullName>
        <shortName evidence="1">HMP-P synthase</shortName>
        <shortName evidence="1">HMP-phosphate synthase</shortName>
        <shortName evidence="1">HMPP synthase</shortName>
    </alternativeName>
    <alternativeName>
        <fullName evidence="1">Thiamine biosynthesis protein ThiC</fullName>
    </alternativeName>
</protein>